<evidence type="ECO:0000250" key="1">
    <source>
        <dbReference type="UniProtKB" id="Q9LY46"/>
    </source>
</evidence>
<evidence type="ECO:0000255" key="2"/>
<evidence type="ECO:0000255" key="3">
    <source>
        <dbReference type="PROSITE-ProRule" id="PRU00498"/>
    </source>
</evidence>
<evidence type="ECO:0000269" key="4">
    <source>
    </source>
</evidence>
<evidence type="ECO:0000269" key="5">
    <source>
    </source>
</evidence>
<evidence type="ECO:0000303" key="6">
    <source>
    </source>
</evidence>
<evidence type="ECO:0000303" key="7">
    <source>
    </source>
</evidence>
<evidence type="ECO:0000305" key="8"/>
<evidence type="ECO:0000305" key="9">
    <source>
    </source>
</evidence>
<evidence type="ECO:0000305" key="10">
    <source>
    </source>
</evidence>
<evidence type="ECO:0000305" key="11">
    <source>
    </source>
</evidence>
<evidence type="ECO:0000312" key="12">
    <source>
        <dbReference type="Araport" id="AT1G70230"/>
    </source>
</evidence>
<evidence type="ECO:0000312" key="13">
    <source>
        <dbReference type="EMBL" id="AAB61094.1"/>
    </source>
</evidence>
<name>TBL27_ARATH</name>
<feature type="chain" id="PRO_0000425392" description="Xyloglucan O-acetyltransferase 1">
    <location>
        <begin position="1"/>
        <end position="416"/>
    </location>
</feature>
<feature type="topological domain" description="Cytoplasmic" evidence="8">
    <location>
        <begin position="1"/>
        <end position="14"/>
    </location>
</feature>
<feature type="transmembrane region" description="Helical; Signal-anchor for type II membrane protein" evidence="2">
    <location>
        <begin position="15"/>
        <end position="35"/>
    </location>
</feature>
<feature type="topological domain" description="Lumenal" evidence="8">
    <location>
        <begin position="36"/>
        <end position="416"/>
    </location>
</feature>
<feature type="short sequence motif" description="GDS motif" evidence="11">
    <location>
        <begin position="152"/>
        <end position="154"/>
    </location>
</feature>
<feature type="short sequence motif" description="DXXH motif" evidence="11">
    <location>
        <begin position="390"/>
        <end position="393"/>
    </location>
</feature>
<feature type="active site" description="Nucleophile" evidence="1">
    <location>
        <position position="154"/>
    </location>
</feature>
<feature type="active site" description="Proton donor" evidence="1">
    <location>
        <position position="390"/>
    </location>
</feature>
<feature type="active site" description="Proton acceptor" evidence="1">
    <location>
        <position position="393"/>
    </location>
</feature>
<feature type="glycosylation site" description="N-linked (GlcNAc...) asparagine" evidence="3">
    <location>
        <position position="96"/>
    </location>
</feature>
<feature type="glycosylation site" description="N-linked (GlcNAc...) asparagine" evidence="3">
    <location>
        <position position="194"/>
    </location>
</feature>
<feature type="glycosylation site" description="N-linked (GlcNAc...) asparagine" evidence="3">
    <location>
        <position position="269"/>
    </location>
</feature>
<feature type="glycosylation site" description="N-linked (GlcNAc...) asparagine" evidence="3">
    <location>
        <position position="319"/>
    </location>
</feature>
<feature type="disulfide bond" evidence="1">
    <location>
        <begin position="79"/>
        <end position="129"/>
    </location>
</feature>
<feature type="disulfide bond" evidence="1">
    <location>
        <begin position="100"/>
        <end position="165"/>
    </location>
</feature>
<feature type="disulfide bond" evidence="1">
    <location>
        <begin position="109"/>
        <end position="395"/>
    </location>
</feature>
<feature type="disulfide bond" evidence="1">
    <location>
        <begin position="318"/>
        <end position="391"/>
    </location>
</feature>
<feature type="mutagenesis site" description="In axy4-1; reduced xyloglucan O-acetylation. Almost abolishes xyloglucan acetyltransferase activity." evidence="4 5">
    <original>P</original>
    <variation>S</variation>
    <location>
        <position position="126"/>
    </location>
</feature>
<feature type="mutagenesis site" description="Almost abolishes xyloglucan acetyltransferase activity." evidence="5">
    <original>G</original>
    <variation>A</variation>
    <location>
        <position position="152"/>
    </location>
</feature>
<feature type="mutagenesis site" description="Almost abolishes xyloglucan acetyltransferase activity." evidence="5">
    <original>D</original>
    <variation>A</variation>
    <location>
        <position position="153"/>
    </location>
</feature>
<feature type="mutagenesis site" description="Abolishes xyloglucan acetyltransferase activity." evidence="5">
    <original>S</original>
    <variation>A</variation>
    <location>
        <position position="154"/>
    </location>
</feature>
<feature type="mutagenesis site" description="Abolishes xyloglucan acetyltransferase activity; when associated with K-368." evidence="5">
    <original>D</original>
    <variation>E</variation>
    <location>
        <position position="367"/>
    </location>
</feature>
<feature type="mutagenesis site" description="Abolishes xyloglucan acetyltransferase activity; when associated with E-367." evidence="5">
    <original>G</original>
    <variation>K</variation>
    <location>
        <position position="368"/>
    </location>
</feature>
<feature type="mutagenesis site" description="Abolishes xyloglucan acetyltransferase activity." evidence="5">
    <original>D</original>
    <variation>A</variation>
    <location>
        <position position="390"/>
    </location>
</feature>
<feature type="mutagenesis site" description="Abolishes xyloglucan acetyltransferase activity." evidence="5">
    <original>H</original>
    <variation>A</variation>
    <location>
        <position position="393"/>
    </location>
</feature>
<gene>
    <name evidence="6" type="primary">AXY4</name>
    <name evidence="6" type="synonym">TBL27</name>
    <name evidence="7" type="synonym">XGOAT1</name>
    <name evidence="12" type="ordered locus">At1g70230</name>
    <name evidence="13" type="ORF">F20P5.5</name>
</gene>
<comment type="function">
    <text evidence="4 5">Xyloglucan acetyltransferase that catalyzes the acetylation of fucosylated Gal residues on xyloglucan side chains (PubMed:30083810). Predominantly catalyze 6-O-monoacetylation of Gal residues in the Fuc-Gal-Xyl trisaccharide side chains of xyloglucan oligomers (PubMed:30083810). Involved in xyloglucan specific O-acetylation in roots and rosette leaves (PubMed:22086088).</text>
</comment>
<comment type="biophysicochemical properties">
    <kinetics>
        <KM evidence="5">0.63 mM for xyloglucan oligomer</KM>
        <Vmax evidence="5">65.4 pmol/min/mg enzyme with xyloglucan oligomer as substrate</Vmax>
    </kinetics>
</comment>
<comment type="subcellular location">
    <subcellularLocation>
        <location evidence="8">Golgi apparatus membrane</location>
        <topology evidence="8">Single-pass type II membrane protein</topology>
    </subcellularLocation>
</comment>
<comment type="disruption phenotype">
    <text evidence="4">No visible phenotype. Loss of O-acetylated xyloglucan oligosaccharides in roots and rosette leaves, but no effect on xyloglucan O-acetylation in seeds.</text>
</comment>
<comment type="miscellaneous">
    <text evidence="9">Contains 2 motifs that are conserved in esterases, but it is unlikely that this protein belongs to the catalytically active pectin esterases.</text>
</comment>
<comment type="miscellaneous">
    <text evidence="10">A naturally occurring ecotype (cv. Ty-0) lacks AXY4-mediated xyloglucan O-acetylation due to 2 amino acid changes, Asp367Glu and Gly368Lys (PubMed:22086088).</text>
</comment>
<comment type="similarity">
    <text evidence="8">Belongs to the PC-esterase family. TBL subfamily.</text>
</comment>
<organism>
    <name type="scientific">Arabidopsis thaliana</name>
    <name type="common">Mouse-ear cress</name>
    <dbReference type="NCBI Taxonomy" id="3702"/>
    <lineage>
        <taxon>Eukaryota</taxon>
        <taxon>Viridiplantae</taxon>
        <taxon>Streptophyta</taxon>
        <taxon>Embryophyta</taxon>
        <taxon>Tracheophyta</taxon>
        <taxon>Spermatophyta</taxon>
        <taxon>Magnoliopsida</taxon>
        <taxon>eudicotyledons</taxon>
        <taxon>Gunneridae</taxon>
        <taxon>Pentapetalae</taxon>
        <taxon>rosids</taxon>
        <taxon>malvids</taxon>
        <taxon>Brassicales</taxon>
        <taxon>Brassicaceae</taxon>
        <taxon>Camelineae</taxon>
        <taxon>Arabidopsis</taxon>
    </lineage>
</organism>
<dbReference type="EC" id="2.3.1.-" evidence="5"/>
<dbReference type="EMBL" id="AC002062">
    <property type="protein sequence ID" value="AAB61094.1"/>
    <property type="molecule type" value="Genomic_DNA"/>
</dbReference>
<dbReference type="EMBL" id="CP002684">
    <property type="protein sequence ID" value="AEE35036.1"/>
    <property type="molecule type" value="Genomic_DNA"/>
</dbReference>
<dbReference type="EMBL" id="AY080707">
    <property type="protein sequence ID" value="AAL85025.1"/>
    <property type="molecule type" value="mRNA"/>
</dbReference>
<dbReference type="EMBL" id="AY117213">
    <property type="protein sequence ID" value="AAM51288.1"/>
    <property type="molecule type" value="mRNA"/>
</dbReference>
<dbReference type="PIR" id="C96725">
    <property type="entry name" value="C96725"/>
</dbReference>
<dbReference type="RefSeq" id="NP_177180.1">
    <property type="nucleotide sequence ID" value="NM_105691.5"/>
</dbReference>
<dbReference type="SMR" id="O04523"/>
<dbReference type="FunCoup" id="O04523">
    <property type="interactions" value="1"/>
</dbReference>
<dbReference type="STRING" id="3702.O04523"/>
<dbReference type="GlyCosmos" id="O04523">
    <property type="glycosylation" value="4 sites, No reported glycans"/>
</dbReference>
<dbReference type="GlyGen" id="O04523">
    <property type="glycosylation" value="4 sites"/>
</dbReference>
<dbReference type="iPTMnet" id="O04523"/>
<dbReference type="PaxDb" id="3702-AT1G70230.1"/>
<dbReference type="ProteomicsDB" id="234187"/>
<dbReference type="EnsemblPlants" id="AT1G70230.1">
    <property type="protein sequence ID" value="AT1G70230.1"/>
    <property type="gene ID" value="AT1G70230"/>
</dbReference>
<dbReference type="GeneID" id="843359"/>
<dbReference type="Gramene" id="AT1G70230.1">
    <property type="protein sequence ID" value="AT1G70230.1"/>
    <property type="gene ID" value="AT1G70230"/>
</dbReference>
<dbReference type="KEGG" id="ath:AT1G70230"/>
<dbReference type="Araport" id="AT1G70230"/>
<dbReference type="TAIR" id="AT1G70230">
    <property type="gene designation" value="TBL27"/>
</dbReference>
<dbReference type="eggNOG" id="ENOG502QQXW">
    <property type="taxonomic scope" value="Eukaryota"/>
</dbReference>
<dbReference type="HOGENOM" id="CLU_020953_6_0_1"/>
<dbReference type="InParanoid" id="O04523"/>
<dbReference type="OMA" id="SVSVYWS"/>
<dbReference type="PhylomeDB" id="O04523"/>
<dbReference type="PRO" id="PR:O04523"/>
<dbReference type="Proteomes" id="UP000006548">
    <property type="component" value="Chromosome 1"/>
</dbReference>
<dbReference type="ExpressionAtlas" id="O04523">
    <property type="expression patterns" value="baseline and differential"/>
</dbReference>
<dbReference type="GO" id="GO:0005794">
    <property type="term" value="C:Golgi apparatus"/>
    <property type="evidence" value="ECO:0000314"/>
    <property type="project" value="TAIR"/>
</dbReference>
<dbReference type="GO" id="GO:0000139">
    <property type="term" value="C:Golgi membrane"/>
    <property type="evidence" value="ECO:0007669"/>
    <property type="project" value="UniProtKB-SubCell"/>
</dbReference>
<dbReference type="GO" id="GO:0016413">
    <property type="term" value="F:O-acetyltransferase activity"/>
    <property type="evidence" value="ECO:0007669"/>
    <property type="project" value="InterPro"/>
</dbReference>
<dbReference type="GO" id="GO:0010411">
    <property type="term" value="P:xyloglucan metabolic process"/>
    <property type="evidence" value="ECO:0000315"/>
    <property type="project" value="TAIR"/>
</dbReference>
<dbReference type="InterPro" id="IPR029962">
    <property type="entry name" value="TBL"/>
</dbReference>
<dbReference type="InterPro" id="IPR026057">
    <property type="entry name" value="TBL_C"/>
</dbReference>
<dbReference type="InterPro" id="IPR025846">
    <property type="entry name" value="TBL_N"/>
</dbReference>
<dbReference type="PANTHER" id="PTHR32285">
    <property type="entry name" value="PROTEIN TRICHOME BIREFRINGENCE-LIKE 9-RELATED"/>
    <property type="match status" value="1"/>
</dbReference>
<dbReference type="PANTHER" id="PTHR32285:SF57">
    <property type="entry name" value="XYLOGLUCAN O-ACETYLTRANSFERASE 1"/>
    <property type="match status" value="1"/>
</dbReference>
<dbReference type="Pfam" id="PF13839">
    <property type="entry name" value="PC-Esterase"/>
    <property type="match status" value="1"/>
</dbReference>
<dbReference type="Pfam" id="PF14416">
    <property type="entry name" value="PMR5N"/>
    <property type="match status" value="1"/>
</dbReference>
<reference key="1">
    <citation type="journal article" date="2000" name="Nature">
        <title>Sequence and analysis of chromosome 1 of the plant Arabidopsis thaliana.</title>
        <authorList>
            <person name="Theologis A."/>
            <person name="Ecker J.R."/>
            <person name="Palm C.J."/>
            <person name="Federspiel N.A."/>
            <person name="Kaul S."/>
            <person name="White O."/>
            <person name="Alonso J."/>
            <person name="Altafi H."/>
            <person name="Araujo R."/>
            <person name="Bowman C.L."/>
            <person name="Brooks S.Y."/>
            <person name="Buehler E."/>
            <person name="Chan A."/>
            <person name="Chao Q."/>
            <person name="Chen H."/>
            <person name="Cheuk R.F."/>
            <person name="Chin C.W."/>
            <person name="Chung M.K."/>
            <person name="Conn L."/>
            <person name="Conway A.B."/>
            <person name="Conway A.R."/>
            <person name="Creasy T.H."/>
            <person name="Dewar K."/>
            <person name="Dunn P."/>
            <person name="Etgu P."/>
            <person name="Feldblyum T.V."/>
            <person name="Feng J.-D."/>
            <person name="Fong B."/>
            <person name="Fujii C.Y."/>
            <person name="Gill J.E."/>
            <person name="Goldsmith A.D."/>
            <person name="Haas B."/>
            <person name="Hansen N.F."/>
            <person name="Hughes B."/>
            <person name="Huizar L."/>
            <person name="Hunter J.L."/>
            <person name="Jenkins J."/>
            <person name="Johnson-Hopson C."/>
            <person name="Khan S."/>
            <person name="Khaykin E."/>
            <person name="Kim C.J."/>
            <person name="Koo H.L."/>
            <person name="Kremenetskaia I."/>
            <person name="Kurtz D.B."/>
            <person name="Kwan A."/>
            <person name="Lam B."/>
            <person name="Langin-Hooper S."/>
            <person name="Lee A."/>
            <person name="Lee J.M."/>
            <person name="Lenz C.A."/>
            <person name="Li J.H."/>
            <person name="Li Y.-P."/>
            <person name="Lin X."/>
            <person name="Liu S.X."/>
            <person name="Liu Z.A."/>
            <person name="Luros J.S."/>
            <person name="Maiti R."/>
            <person name="Marziali A."/>
            <person name="Militscher J."/>
            <person name="Miranda M."/>
            <person name="Nguyen M."/>
            <person name="Nierman W.C."/>
            <person name="Osborne B.I."/>
            <person name="Pai G."/>
            <person name="Peterson J."/>
            <person name="Pham P.K."/>
            <person name="Rizzo M."/>
            <person name="Rooney T."/>
            <person name="Rowley D."/>
            <person name="Sakano H."/>
            <person name="Salzberg S.L."/>
            <person name="Schwartz J.R."/>
            <person name="Shinn P."/>
            <person name="Southwick A.M."/>
            <person name="Sun H."/>
            <person name="Tallon L.J."/>
            <person name="Tambunga G."/>
            <person name="Toriumi M.J."/>
            <person name="Town C.D."/>
            <person name="Utterback T."/>
            <person name="Van Aken S."/>
            <person name="Vaysberg M."/>
            <person name="Vysotskaia V.S."/>
            <person name="Walker M."/>
            <person name="Wu D."/>
            <person name="Yu G."/>
            <person name="Fraser C.M."/>
            <person name="Venter J.C."/>
            <person name="Davis R.W."/>
        </authorList>
    </citation>
    <scope>NUCLEOTIDE SEQUENCE [LARGE SCALE GENOMIC DNA]</scope>
    <source>
        <strain>cv. Columbia</strain>
    </source>
</reference>
<reference key="2">
    <citation type="journal article" date="2017" name="Plant J.">
        <title>Araport11: a complete reannotation of the Arabidopsis thaliana reference genome.</title>
        <authorList>
            <person name="Cheng C.Y."/>
            <person name="Krishnakumar V."/>
            <person name="Chan A.P."/>
            <person name="Thibaud-Nissen F."/>
            <person name="Schobel S."/>
            <person name="Town C.D."/>
        </authorList>
    </citation>
    <scope>GENOME REANNOTATION</scope>
    <source>
        <strain>cv. Columbia</strain>
    </source>
</reference>
<reference key="3">
    <citation type="journal article" date="2003" name="Science">
        <title>Empirical analysis of transcriptional activity in the Arabidopsis genome.</title>
        <authorList>
            <person name="Yamada K."/>
            <person name="Lim J."/>
            <person name="Dale J.M."/>
            <person name="Chen H."/>
            <person name="Shinn P."/>
            <person name="Palm C.J."/>
            <person name="Southwick A.M."/>
            <person name="Wu H.C."/>
            <person name="Kim C.J."/>
            <person name="Nguyen M."/>
            <person name="Pham P.K."/>
            <person name="Cheuk R.F."/>
            <person name="Karlin-Newmann G."/>
            <person name="Liu S.X."/>
            <person name="Lam B."/>
            <person name="Sakano H."/>
            <person name="Wu T."/>
            <person name="Yu G."/>
            <person name="Miranda M."/>
            <person name="Quach H.L."/>
            <person name="Tripp M."/>
            <person name="Chang C.H."/>
            <person name="Lee J.M."/>
            <person name="Toriumi M.J."/>
            <person name="Chan M.M."/>
            <person name="Tang C.C."/>
            <person name="Onodera C.S."/>
            <person name="Deng J.M."/>
            <person name="Akiyama K."/>
            <person name="Ansari Y."/>
            <person name="Arakawa T."/>
            <person name="Banh J."/>
            <person name="Banno F."/>
            <person name="Bowser L."/>
            <person name="Brooks S.Y."/>
            <person name="Carninci P."/>
            <person name="Chao Q."/>
            <person name="Choy N."/>
            <person name="Enju A."/>
            <person name="Goldsmith A.D."/>
            <person name="Gurjal M."/>
            <person name="Hansen N.F."/>
            <person name="Hayashizaki Y."/>
            <person name="Johnson-Hopson C."/>
            <person name="Hsuan V.W."/>
            <person name="Iida K."/>
            <person name="Karnes M."/>
            <person name="Khan S."/>
            <person name="Koesema E."/>
            <person name="Ishida J."/>
            <person name="Jiang P.X."/>
            <person name="Jones T."/>
            <person name="Kawai J."/>
            <person name="Kamiya A."/>
            <person name="Meyers C."/>
            <person name="Nakajima M."/>
            <person name="Narusaka M."/>
            <person name="Seki M."/>
            <person name="Sakurai T."/>
            <person name="Satou M."/>
            <person name="Tamse R."/>
            <person name="Vaysberg M."/>
            <person name="Wallender E.K."/>
            <person name="Wong C."/>
            <person name="Yamamura Y."/>
            <person name="Yuan S."/>
            <person name="Shinozaki K."/>
            <person name="Davis R.W."/>
            <person name="Theologis A."/>
            <person name="Ecker J.R."/>
        </authorList>
    </citation>
    <scope>NUCLEOTIDE SEQUENCE [LARGE SCALE MRNA]</scope>
    <source>
        <strain>cv. Columbia</strain>
    </source>
</reference>
<reference key="4">
    <citation type="journal article" date="2007" name="Plant J.">
        <title>Arabidopsis ESK1 encodes a novel regulator of freezing tolerance.</title>
        <authorList>
            <person name="Xin Z."/>
            <person name="Mandaokar A."/>
            <person name="Chen J."/>
            <person name="Last R.L."/>
            <person name="Browse J."/>
        </authorList>
    </citation>
    <scope>GENE FAMILY</scope>
    <source>
        <strain>cv. Columbia</strain>
    </source>
</reference>
<reference key="5">
    <citation type="journal article" date="2010" name="Plant Physiol.">
        <title>TRICHOME BIREFRINGENCE and its homolog AT5G01360 encode plant-specific DUF231 proteins required for cellulose biosynthesis in Arabidopsis.</title>
        <authorList>
            <person name="Bischoff V."/>
            <person name="Nita S."/>
            <person name="Neumetzler L."/>
            <person name="Schindelasch D."/>
            <person name="Urbain A."/>
            <person name="Eshed R."/>
            <person name="Persson S."/>
            <person name="Delmer D."/>
            <person name="Scheible W.R."/>
        </authorList>
    </citation>
    <scope>GENE FAMILY</scope>
    <scope>NOMENCLATURE</scope>
</reference>
<reference key="6">
    <citation type="journal article" date="2011" name="Plant Cell">
        <title>O-acetylation of Arabidopsis hemicellulose xyloglucan requires AXY4 or AXY4L, proteins with a TBL and DUF231 domain.</title>
        <authorList>
            <person name="Gille S."/>
            <person name="de Souza A."/>
            <person name="Xiong G."/>
            <person name="Benz M."/>
            <person name="Cheng K."/>
            <person name="Schultink A."/>
            <person name="Reca I.B."/>
            <person name="Pauly M."/>
        </authorList>
    </citation>
    <scope>FUNCTION</scope>
    <scope>DISRUPTION PHENOTYPE</scope>
    <scope>MUTAGENESIS OF PRO-126</scope>
    <scope>SUBCELLULAR LOCATION</scope>
    <source>
        <strain>cv. Columbia</strain>
        <strain>cv. Ty-0</strain>
    </source>
</reference>
<reference key="7">
    <citation type="journal article" date="2018" name="Planta">
        <title>Xyloglucan O-acetyltransferases from Arabidopsis thaliana and Populus trichocarpa catalyze acetylation of fucosylated galactose residues on xyloglucan side chains.</title>
        <authorList>
            <person name="Zhong R."/>
            <person name="Cui D."/>
            <person name="Ye Z.H."/>
        </authorList>
    </citation>
    <scope>FUNCTION</scope>
    <scope>CATALYTIC ACTIVITY</scope>
    <scope>BIOPHYSICOCHEMICAL PROPERTIES</scope>
    <scope>MUTAGENESIS OF PRO-126; GLY-152; ASP-153; SER-154; ASP-367; GLY-368; ASP-390 AND HIS-393</scope>
</reference>
<reference key="8">
    <citation type="journal article" date="2010" name="Plant Signal. Behav.">
        <title>Involvement of TBL/DUF231 proteins into cell wall biology.</title>
        <authorList>
            <person name="Bischoff V."/>
            <person name="Selbig J."/>
            <person name="Scheible W.R."/>
        </authorList>
    </citation>
    <scope>3D-STRUCTURE MODELING</scope>
</reference>
<protein>
    <recommendedName>
        <fullName evidence="7">Xyloglucan O-acetyltransferase 1</fullName>
        <ecNumber evidence="5">2.3.1.-</ecNumber>
    </recommendedName>
    <alternativeName>
        <fullName evidence="6">Protein ALTERED XYLOGLUCAN 4</fullName>
    </alternativeName>
    <alternativeName>
        <fullName evidence="6">Protein TRICHOME BIREFRINGENCE-LIKE 27</fullName>
    </alternativeName>
</protein>
<accession>O04523</accession>
<proteinExistence type="evidence at protein level"/>
<sequence length="416" mass="47474">MGLNEQQNVPSQRKIIVFIVLAFIPIALFRLCFNNPFSSIKDTSLQDSAANVVITSFSSSSQEEESQESFDHIQDEPLCDYTQGNWVRDEIGPLYNGSTCGTIKDGQNCFRHGRPDSGYLYWKWKPNECDIPRFDSNRFLDLMRDKHLAFIGDSMARNQLESLLCLLSTVSSPDLVYRNGEDNKFRRWRFESHNVTVSVYWSPFLVAGLEKSGNLDHNVLHIDRVDERWGNDLERFDTVVVSVGHWFLHPAVYYESGSVLGCHSCETSNCTEVGFYDVFRKAIRTTLRAVAGSGREVILTTFSPSHFEGRPWDSLGACNMTKPYEGKVLEGLDLDMRKIEIEEYTAAAAEVRLEVLDVTAMSVLRPDGHPGPYMYADPFKNGVPERIPNDCLHWCLPGPVDTWNEIMIEMLRRWKV</sequence>
<keyword id="KW-1015">Disulfide bond</keyword>
<keyword id="KW-0325">Glycoprotein</keyword>
<keyword id="KW-0333">Golgi apparatus</keyword>
<keyword id="KW-0472">Membrane</keyword>
<keyword id="KW-1185">Reference proteome</keyword>
<keyword id="KW-0735">Signal-anchor</keyword>
<keyword id="KW-0808">Transferase</keyword>
<keyword id="KW-0812">Transmembrane</keyword>
<keyword id="KW-1133">Transmembrane helix</keyword>